<comment type="function">
    <text evidence="1">Acts in transcription repression. Involved in the tethering of the SIN3 complex to core histone proteins (By similarity).</text>
</comment>
<comment type="subunit">
    <text evidence="1">Interacts with SIN3 and histone deacetylase.</text>
</comment>
<comment type="similarity">
    <text evidence="3">Belongs to the SAP18 family.</text>
</comment>
<dbReference type="EMBL" id="Z46787">
    <property type="protein sequence ID" value="CAA86742.1"/>
    <property type="molecule type" value="Genomic_DNA"/>
</dbReference>
<dbReference type="PIR" id="T19325">
    <property type="entry name" value="T19325"/>
</dbReference>
<dbReference type="RefSeq" id="NP_497833.1">
    <property type="nucleotide sequence ID" value="NM_065432.5"/>
</dbReference>
<dbReference type="SMR" id="Q09250"/>
<dbReference type="BioGRID" id="40771">
    <property type="interactions" value="7"/>
</dbReference>
<dbReference type="FunCoup" id="Q09250">
    <property type="interactions" value="3067"/>
</dbReference>
<dbReference type="IntAct" id="Q09250">
    <property type="interactions" value="1"/>
</dbReference>
<dbReference type="STRING" id="6239.C16C10.4.1"/>
<dbReference type="iPTMnet" id="Q09250"/>
<dbReference type="PaxDb" id="6239-C16C10.4.3"/>
<dbReference type="PeptideAtlas" id="Q09250"/>
<dbReference type="EnsemblMetazoa" id="C16C10.4.1">
    <property type="protein sequence ID" value="C16C10.4.1"/>
    <property type="gene ID" value="WBGene00007625"/>
</dbReference>
<dbReference type="EnsemblMetazoa" id="C16C10.4.2">
    <property type="protein sequence ID" value="C16C10.4.2"/>
    <property type="gene ID" value="WBGene00007625"/>
</dbReference>
<dbReference type="GeneID" id="175534"/>
<dbReference type="KEGG" id="cel:CELE_C16C10.4"/>
<dbReference type="UCSC" id="C16C10.4.2">
    <property type="organism name" value="c. elegans"/>
</dbReference>
<dbReference type="AGR" id="WB:WBGene00007625"/>
<dbReference type="CTD" id="175534"/>
<dbReference type="WormBase" id="C16C10.4">
    <property type="protein sequence ID" value="CE01495"/>
    <property type="gene ID" value="WBGene00007625"/>
</dbReference>
<dbReference type="eggNOG" id="KOG3391">
    <property type="taxonomic scope" value="Eukaryota"/>
</dbReference>
<dbReference type="GeneTree" id="ENSGT00390000003152"/>
<dbReference type="HOGENOM" id="CLU_108681_0_1_1"/>
<dbReference type="InParanoid" id="Q09250"/>
<dbReference type="OMA" id="TYRMREI"/>
<dbReference type="OrthoDB" id="440566at2759"/>
<dbReference type="PhylomeDB" id="Q09250"/>
<dbReference type="Reactome" id="R-CEL-72163">
    <property type="pathway name" value="mRNA Splicing - Major Pathway"/>
</dbReference>
<dbReference type="PRO" id="PR:Q09250"/>
<dbReference type="Proteomes" id="UP000001940">
    <property type="component" value="Chromosome III"/>
</dbReference>
<dbReference type="Bgee" id="WBGene00007625">
    <property type="expression patterns" value="Expressed in embryo and 4 other cell types or tissues"/>
</dbReference>
<dbReference type="GO" id="GO:0005634">
    <property type="term" value="C:nucleus"/>
    <property type="evidence" value="ECO:0000318"/>
    <property type="project" value="GO_Central"/>
</dbReference>
<dbReference type="GO" id="GO:0003714">
    <property type="term" value="F:transcription corepressor activity"/>
    <property type="evidence" value="ECO:0000318"/>
    <property type="project" value="GO_Central"/>
</dbReference>
<dbReference type="GO" id="GO:0045892">
    <property type="term" value="P:negative regulation of DNA-templated transcription"/>
    <property type="evidence" value="ECO:0000318"/>
    <property type="project" value="GO_Central"/>
</dbReference>
<dbReference type="FunFam" id="3.10.20.550:FF:000001">
    <property type="entry name" value="Histone deacetylase complex subunit SAP18"/>
    <property type="match status" value="1"/>
</dbReference>
<dbReference type="Gene3D" id="3.10.20.550">
    <property type="entry name" value="ASAP complex, SAP18 subunit"/>
    <property type="match status" value="1"/>
</dbReference>
<dbReference type="InterPro" id="IPR010516">
    <property type="entry name" value="SAP18"/>
</dbReference>
<dbReference type="InterPro" id="IPR042534">
    <property type="entry name" value="SAP18_sf"/>
</dbReference>
<dbReference type="PANTHER" id="PTHR13082:SF0">
    <property type="entry name" value="HISTONE DEACETYLASE COMPLEX SUBUNIT SAP18"/>
    <property type="match status" value="1"/>
</dbReference>
<dbReference type="PANTHER" id="PTHR13082">
    <property type="entry name" value="SAP18"/>
    <property type="match status" value="1"/>
</dbReference>
<dbReference type="Pfam" id="PF06487">
    <property type="entry name" value="SAP18"/>
    <property type="match status" value="1"/>
</dbReference>
<protein>
    <recommendedName>
        <fullName>Probable histone deacetylase complex subunit SAP18</fullName>
    </recommendedName>
    <alternativeName>
        <fullName>18 kDa Sin3-associated polypeptide</fullName>
    </alternativeName>
</protein>
<feature type="chain" id="PRO_0000220977" description="Probable histone deacetylase complex subunit SAP18">
    <location>
        <begin position="1"/>
        <end position="166"/>
    </location>
</feature>
<feature type="region of interest" description="Disordered" evidence="2">
    <location>
        <begin position="143"/>
        <end position="166"/>
    </location>
</feature>
<feature type="compositionally biased region" description="Basic and acidic residues" evidence="2">
    <location>
        <begin position="147"/>
        <end position="158"/>
    </location>
</feature>
<sequence>MSNGQLVSQVTVGHDKPLDREKVCPMLLRVFVANNRHNPMSEYNSRNGGSVPPSELQMHTWMDCSLRELTSLIKEVNPDARRKGTTFDFAIVQADRGSPRYILRDVGNTTNGERGIDDNKTLQQCKFEVGDFVDVAISLPSQGRRFNNREQGDRFDHRQRQRSPIR</sequence>
<accession>Q09250</accession>
<organism>
    <name type="scientific">Caenorhabditis elegans</name>
    <dbReference type="NCBI Taxonomy" id="6239"/>
    <lineage>
        <taxon>Eukaryota</taxon>
        <taxon>Metazoa</taxon>
        <taxon>Ecdysozoa</taxon>
        <taxon>Nematoda</taxon>
        <taxon>Chromadorea</taxon>
        <taxon>Rhabditida</taxon>
        <taxon>Rhabditina</taxon>
        <taxon>Rhabditomorpha</taxon>
        <taxon>Rhabditoidea</taxon>
        <taxon>Rhabditidae</taxon>
        <taxon>Peloderinae</taxon>
        <taxon>Caenorhabditis</taxon>
    </lineage>
</organism>
<keyword id="KW-1185">Reference proteome</keyword>
<keyword id="KW-0678">Repressor</keyword>
<keyword id="KW-0804">Transcription</keyword>
<keyword id="KW-0805">Transcription regulation</keyword>
<gene>
    <name type="ORF">C16C10.4</name>
</gene>
<reference key="1">
    <citation type="journal article" date="1998" name="Science">
        <title>Genome sequence of the nematode C. elegans: a platform for investigating biology.</title>
        <authorList>
            <consortium name="The C. elegans sequencing consortium"/>
        </authorList>
    </citation>
    <scope>NUCLEOTIDE SEQUENCE [LARGE SCALE GENOMIC DNA]</scope>
    <source>
        <strain>Bristol N2</strain>
    </source>
</reference>
<name>SAP18_CAEEL</name>
<evidence type="ECO:0000250" key="1"/>
<evidence type="ECO:0000256" key="2">
    <source>
        <dbReference type="SAM" id="MobiDB-lite"/>
    </source>
</evidence>
<evidence type="ECO:0000305" key="3"/>
<proteinExistence type="inferred from homology"/>